<evidence type="ECO:0000255" key="1">
    <source>
        <dbReference type="HAMAP-Rule" id="MF_01361"/>
    </source>
</evidence>
<gene>
    <name type="ordered locus">ABO_0024</name>
</gene>
<keyword id="KW-1003">Cell membrane</keyword>
<keyword id="KW-0472">Membrane</keyword>
<keyword id="KW-1185">Reference proteome</keyword>
<keyword id="KW-0812">Transmembrane</keyword>
<keyword id="KW-1133">Transmembrane helix</keyword>
<proteinExistence type="inferred from homology"/>
<reference key="1">
    <citation type="journal article" date="2006" name="Nat. Biotechnol.">
        <title>Genome sequence of the ubiquitous hydrocarbon-degrading marine bacterium Alcanivorax borkumensis.</title>
        <authorList>
            <person name="Schneiker S."/>
            <person name="Martins dos Santos V.A.P."/>
            <person name="Bartels D."/>
            <person name="Bekel T."/>
            <person name="Brecht M."/>
            <person name="Buhrmester J."/>
            <person name="Chernikova T.N."/>
            <person name="Denaro R."/>
            <person name="Ferrer M."/>
            <person name="Gertler C."/>
            <person name="Goesmann A."/>
            <person name="Golyshina O.V."/>
            <person name="Kaminski F."/>
            <person name="Khachane A.N."/>
            <person name="Lang S."/>
            <person name="Linke B."/>
            <person name="McHardy A.C."/>
            <person name="Meyer F."/>
            <person name="Nechitaylo T."/>
            <person name="Puehler A."/>
            <person name="Regenhardt D."/>
            <person name="Rupp O."/>
            <person name="Sabirova J.S."/>
            <person name="Selbitschka W."/>
            <person name="Yakimov M.M."/>
            <person name="Timmis K.N."/>
            <person name="Vorhoelter F.-J."/>
            <person name="Weidner S."/>
            <person name="Kaiser O."/>
            <person name="Golyshin P.N."/>
        </authorList>
    </citation>
    <scope>NUCLEOTIDE SEQUENCE [LARGE SCALE GENOMIC DNA]</scope>
    <source>
        <strain>ATCC 700651 / DSM 11573 / NCIMB 13689 / SK2</strain>
    </source>
</reference>
<organism>
    <name type="scientific">Alcanivorax borkumensis (strain ATCC 700651 / DSM 11573 / NCIMB 13689 / SK2)</name>
    <dbReference type="NCBI Taxonomy" id="393595"/>
    <lineage>
        <taxon>Bacteria</taxon>
        <taxon>Pseudomonadati</taxon>
        <taxon>Pseudomonadota</taxon>
        <taxon>Gammaproteobacteria</taxon>
        <taxon>Oceanospirillales</taxon>
        <taxon>Alcanivoracaceae</taxon>
        <taxon>Alcanivorax</taxon>
    </lineage>
</organism>
<feature type="chain" id="PRO_0000270217" description="UPF0391 membrane protein ABO_0024">
    <location>
        <begin position="1"/>
        <end position="58"/>
    </location>
</feature>
<feature type="transmembrane region" description="Helical" evidence="1">
    <location>
        <begin position="4"/>
        <end position="24"/>
    </location>
</feature>
<feature type="transmembrane region" description="Helical" evidence="1">
    <location>
        <begin position="28"/>
        <end position="48"/>
    </location>
</feature>
<sequence>MLGWALTFLVVAIIAGVLGFGGIASGAASIAKIIFFIFLALLVISLVVNALKGRGPKV</sequence>
<accession>Q0VTN6</accession>
<protein>
    <recommendedName>
        <fullName evidence="1">UPF0391 membrane protein ABO_0024</fullName>
    </recommendedName>
</protein>
<dbReference type="EMBL" id="AM286690">
    <property type="protein sequence ID" value="CAL15472.1"/>
    <property type="molecule type" value="Genomic_DNA"/>
</dbReference>
<dbReference type="STRING" id="393595.ABO_0024"/>
<dbReference type="KEGG" id="abo:ABO_0024"/>
<dbReference type="eggNOG" id="COG5487">
    <property type="taxonomic scope" value="Bacteria"/>
</dbReference>
<dbReference type="HOGENOM" id="CLU_187346_1_0_6"/>
<dbReference type="Proteomes" id="UP000008871">
    <property type="component" value="Chromosome"/>
</dbReference>
<dbReference type="GO" id="GO:0005886">
    <property type="term" value="C:plasma membrane"/>
    <property type="evidence" value="ECO:0007669"/>
    <property type="project" value="UniProtKB-SubCell"/>
</dbReference>
<dbReference type="HAMAP" id="MF_01361">
    <property type="entry name" value="UPF0391"/>
    <property type="match status" value="1"/>
</dbReference>
<dbReference type="InterPro" id="IPR009760">
    <property type="entry name" value="DUF1328"/>
</dbReference>
<dbReference type="NCBIfam" id="NF010226">
    <property type="entry name" value="PRK13682.1-1"/>
    <property type="match status" value="1"/>
</dbReference>
<dbReference type="NCBIfam" id="NF010228">
    <property type="entry name" value="PRK13682.1-3"/>
    <property type="match status" value="1"/>
</dbReference>
<dbReference type="NCBIfam" id="NF010229">
    <property type="entry name" value="PRK13682.1-4"/>
    <property type="match status" value="1"/>
</dbReference>
<dbReference type="Pfam" id="PF07043">
    <property type="entry name" value="DUF1328"/>
    <property type="match status" value="1"/>
</dbReference>
<dbReference type="PIRSF" id="PIRSF036466">
    <property type="entry name" value="UCP036466"/>
    <property type="match status" value="1"/>
</dbReference>
<name>Y024_ALCBS</name>
<comment type="subcellular location">
    <subcellularLocation>
        <location evidence="1">Cell membrane</location>
        <topology evidence="1">Multi-pass membrane protein</topology>
    </subcellularLocation>
</comment>
<comment type="similarity">
    <text evidence="1">Belongs to the UPF0391 family.</text>
</comment>